<reference key="1">
    <citation type="journal article" date="2006" name="Appl. Environ. Microbiol.">
        <title>Genome sequence of the chemolithoautotrophic nitrite-oxidizing bacterium Nitrobacter winogradskyi Nb-255.</title>
        <authorList>
            <person name="Starkenburg S.R."/>
            <person name="Chain P.S.G."/>
            <person name="Sayavedra-Soto L.A."/>
            <person name="Hauser L."/>
            <person name="Land M.L."/>
            <person name="Larimer F.W."/>
            <person name="Malfatti S.A."/>
            <person name="Klotz M.G."/>
            <person name="Bottomley P.J."/>
            <person name="Arp D.J."/>
            <person name="Hickey W.J."/>
        </authorList>
    </citation>
    <scope>NUCLEOTIDE SEQUENCE [LARGE SCALE GENOMIC DNA]</scope>
    <source>
        <strain>ATCC 25391 / DSM 10237 / CIP 104748 / NCIMB 11846 / Nb-255</strain>
    </source>
</reference>
<comment type="function">
    <text evidence="1">The UvrABC repair system catalyzes the recognition and processing of DNA lesions. UvrC both incises the 5' and 3' sides of the lesion. The N-terminal half is responsible for the 3' incision and the C-terminal half is responsible for the 5' incision.</text>
</comment>
<comment type="subunit">
    <text evidence="1">Interacts with UvrB in an incision complex.</text>
</comment>
<comment type="subcellular location">
    <subcellularLocation>
        <location evidence="1">Cytoplasm</location>
    </subcellularLocation>
</comment>
<comment type="similarity">
    <text evidence="1">Belongs to the UvrC family.</text>
</comment>
<comment type="sequence caution" evidence="3">
    <conflict type="erroneous initiation">
        <sequence resource="EMBL-CDS" id="ABA05779"/>
    </conflict>
</comment>
<sequence>MTSDSSDTAKQIGSGQPSGSPADMRRRDGVAPEQEVDPASLETDEDDEARLPDLPDEPVDAVAEAPLAIGRAAIEHAVRHAPTSPGVYRMMNAARDVLYVGKAKNVRKRLSSYARPTGQVMRIARMIAATAAVEIVSTGTETEALLLEANLIKQLRPRFNVQLRDDKSFPYILITGDHWAPQLLKHRGAQSRPGRYFGPFASAGAVGRTITALQRAFLVRSCTDSFFESRTRPCLLYQIKRCAGPCTGEIDFPGYTALVREATDFLSGRSRAVKEDLARAMEQAAADLAFERAALYRDRLAALSAIQSQQGINPRTVEEADVFAIHQEGGYFCVEVFFFRTGQNWGNRAYFPRAEKSFTPEEVLGSFLAQFYDDKPPPRLILLSHRIEESELLAHALSIKAGCKVVVSTPQRGEKKELVAHALTNAREALGRKLADTATQSRLLQGLAALLGLPQPPQRVEVYDNSHIQGANAVGAMIVAGPEGFLKNQYRKFNIRSESLTPGDDYAMMREVLERRFKRLLTQKAADSRAAAEQDSAPQWPDLVIIDGGLGQLNAARGVVDALGLSRVSLMAVAKGPDRDAGRETLFLPDRPAIKLEPRDPVLYFIQRLRDEAHRFVIGSHRKLRRKDIREAGLQEVPGIGPARKRALLHHFGTLKEIERASLADLGKVPGISAESARRIFDFFHARPA</sequence>
<proteinExistence type="inferred from homology"/>
<keyword id="KW-0963">Cytoplasm</keyword>
<keyword id="KW-0227">DNA damage</keyword>
<keyword id="KW-0228">DNA excision</keyword>
<keyword id="KW-0234">DNA repair</keyword>
<keyword id="KW-0267">Excision nuclease</keyword>
<keyword id="KW-1185">Reference proteome</keyword>
<keyword id="KW-0742">SOS response</keyword>
<gene>
    <name evidence="1" type="primary">uvrC</name>
    <name type="ordered locus">Nwi_2526</name>
</gene>
<protein>
    <recommendedName>
        <fullName evidence="1">UvrABC system protein C</fullName>
        <shortName evidence="1">Protein UvrC</shortName>
    </recommendedName>
    <alternativeName>
        <fullName evidence="1">Excinuclease ABC subunit C</fullName>
    </alternativeName>
</protein>
<evidence type="ECO:0000255" key="1">
    <source>
        <dbReference type="HAMAP-Rule" id="MF_00203"/>
    </source>
</evidence>
<evidence type="ECO:0000256" key="2">
    <source>
        <dbReference type="SAM" id="MobiDB-lite"/>
    </source>
</evidence>
<evidence type="ECO:0000305" key="3"/>
<accession>Q3SPL2</accession>
<organism>
    <name type="scientific">Nitrobacter winogradskyi (strain ATCC 25391 / DSM 10237 / CIP 104748 / NCIMB 11846 / Nb-255)</name>
    <dbReference type="NCBI Taxonomy" id="323098"/>
    <lineage>
        <taxon>Bacteria</taxon>
        <taxon>Pseudomonadati</taxon>
        <taxon>Pseudomonadota</taxon>
        <taxon>Alphaproteobacteria</taxon>
        <taxon>Hyphomicrobiales</taxon>
        <taxon>Nitrobacteraceae</taxon>
        <taxon>Nitrobacter</taxon>
    </lineage>
</organism>
<feature type="chain" id="PRO_0000264918" description="UvrABC system protein C">
    <location>
        <begin position="1"/>
        <end position="689"/>
    </location>
</feature>
<feature type="domain" description="GIY-YIG" evidence="1">
    <location>
        <begin position="83"/>
        <end position="161"/>
    </location>
</feature>
<feature type="domain" description="UVR" evidence="1">
    <location>
        <begin position="271"/>
        <end position="306"/>
    </location>
</feature>
<feature type="region of interest" description="Disordered" evidence="2">
    <location>
        <begin position="1"/>
        <end position="59"/>
    </location>
</feature>
<feature type="compositionally biased region" description="Polar residues" evidence="2">
    <location>
        <begin position="1"/>
        <end position="19"/>
    </location>
</feature>
<feature type="compositionally biased region" description="Acidic residues" evidence="2">
    <location>
        <begin position="42"/>
        <end position="59"/>
    </location>
</feature>
<name>UVRC_NITWN</name>
<dbReference type="EMBL" id="CP000115">
    <property type="protein sequence ID" value="ABA05779.1"/>
    <property type="status" value="ALT_INIT"/>
    <property type="molecule type" value="Genomic_DNA"/>
</dbReference>
<dbReference type="SMR" id="Q3SPL2"/>
<dbReference type="STRING" id="323098.Nwi_2526"/>
<dbReference type="KEGG" id="nwi:Nwi_2526"/>
<dbReference type="eggNOG" id="COG0322">
    <property type="taxonomic scope" value="Bacteria"/>
</dbReference>
<dbReference type="HOGENOM" id="CLU_014841_3_0_5"/>
<dbReference type="OrthoDB" id="9804933at2"/>
<dbReference type="Proteomes" id="UP000002531">
    <property type="component" value="Chromosome"/>
</dbReference>
<dbReference type="GO" id="GO:0005737">
    <property type="term" value="C:cytoplasm"/>
    <property type="evidence" value="ECO:0007669"/>
    <property type="project" value="UniProtKB-SubCell"/>
</dbReference>
<dbReference type="GO" id="GO:0009380">
    <property type="term" value="C:excinuclease repair complex"/>
    <property type="evidence" value="ECO:0007669"/>
    <property type="project" value="InterPro"/>
</dbReference>
<dbReference type="GO" id="GO:0003677">
    <property type="term" value="F:DNA binding"/>
    <property type="evidence" value="ECO:0007669"/>
    <property type="project" value="UniProtKB-UniRule"/>
</dbReference>
<dbReference type="GO" id="GO:0009381">
    <property type="term" value="F:excinuclease ABC activity"/>
    <property type="evidence" value="ECO:0007669"/>
    <property type="project" value="UniProtKB-UniRule"/>
</dbReference>
<dbReference type="GO" id="GO:0006289">
    <property type="term" value="P:nucleotide-excision repair"/>
    <property type="evidence" value="ECO:0007669"/>
    <property type="project" value="UniProtKB-UniRule"/>
</dbReference>
<dbReference type="GO" id="GO:0009432">
    <property type="term" value="P:SOS response"/>
    <property type="evidence" value="ECO:0007669"/>
    <property type="project" value="UniProtKB-UniRule"/>
</dbReference>
<dbReference type="CDD" id="cd10434">
    <property type="entry name" value="GIY-YIG_UvrC_Cho"/>
    <property type="match status" value="1"/>
</dbReference>
<dbReference type="FunFam" id="3.30.420.340:FF:000001">
    <property type="entry name" value="UvrABC system protein C"/>
    <property type="match status" value="1"/>
</dbReference>
<dbReference type="FunFam" id="3.40.1440.10:FF:000001">
    <property type="entry name" value="UvrABC system protein C"/>
    <property type="match status" value="1"/>
</dbReference>
<dbReference type="Gene3D" id="1.10.150.20">
    <property type="entry name" value="5' to 3' exonuclease, C-terminal subdomain"/>
    <property type="match status" value="1"/>
</dbReference>
<dbReference type="Gene3D" id="3.40.1440.10">
    <property type="entry name" value="GIY-YIG endonuclease"/>
    <property type="match status" value="1"/>
</dbReference>
<dbReference type="Gene3D" id="4.10.860.10">
    <property type="entry name" value="UVR domain"/>
    <property type="match status" value="1"/>
</dbReference>
<dbReference type="Gene3D" id="3.30.420.340">
    <property type="entry name" value="UvrC, RNAse H endonuclease domain"/>
    <property type="match status" value="1"/>
</dbReference>
<dbReference type="HAMAP" id="MF_00203">
    <property type="entry name" value="UvrC"/>
    <property type="match status" value="1"/>
</dbReference>
<dbReference type="InterPro" id="IPR000305">
    <property type="entry name" value="GIY-YIG_endonuc"/>
</dbReference>
<dbReference type="InterPro" id="IPR035901">
    <property type="entry name" value="GIY-YIG_endonuc_sf"/>
</dbReference>
<dbReference type="InterPro" id="IPR047296">
    <property type="entry name" value="GIY-YIG_UvrC_Cho"/>
</dbReference>
<dbReference type="InterPro" id="IPR003583">
    <property type="entry name" value="Hlx-hairpin-Hlx_DNA-bd_motif"/>
</dbReference>
<dbReference type="InterPro" id="IPR010994">
    <property type="entry name" value="RuvA_2-like"/>
</dbReference>
<dbReference type="InterPro" id="IPR001943">
    <property type="entry name" value="UVR_dom"/>
</dbReference>
<dbReference type="InterPro" id="IPR036876">
    <property type="entry name" value="UVR_dom_sf"/>
</dbReference>
<dbReference type="InterPro" id="IPR050066">
    <property type="entry name" value="UvrABC_protein_C"/>
</dbReference>
<dbReference type="InterPro" id="IPR004791">
    <property type="entry name" value="UvrC"/>
</dbReference>
<dbReference type="InterPro" id="IPR001162">
    <property type="entry name" value="UvrC_RNase_H_dom"/>
</dbReference>
<dbReference type="InterPro" id="IPR038476">
    <property type="entry name" value="UvrC_RNase_H_dom_sf"/>
</dbReference>
<dbReference type="NCBIfam" id="NF001824">
    <property type="entry name" value="PRK00558.1-5"/>
    <property type="match status" value="1"/>
</dbReference>
<dbReference type="NCBIfam" id="TIGR00194">
    <property type="entry name" value="uvrC"/>
    <property type="match status" value="1"/>
</dbReference>
<dbReference type="PANTHER" id="PTHR30562:SF1">
    <property type="entry name" value="UVRABC SYSTEM PROTEIN C"/>
    <property type="match status" value="1"/>
</dbReference>
<dbReference type="PANTHER" id="PTHR30562">
    <property type="entry name" value="UVRC/OXIDOREDUCTASE"/>
    <property type="match status" value="1"/>
</dbReference>
<dbReference type="Pfam" id="PF01541">
    <property type="entry name" value="GIY-YIG"/>
    <property type="match status" value="1"/>
</dbReference>
<dbReference type="Pfam" id="PF14520">
    <property type="entry name" value="HHH_5"/>
    <property type="match status" value="1"/>
</dbReference>
<dbReference type="Pfam" id="PF02151">
    <property type="entry name" value="UVR"/>
    <property type="match status" value="1"/>
</dbReference>
<dbReference type="Pfam" id="PF22920">
    <property type="entry name" value="UvrC_RNaseH"/>
    <property type="match status" value="1"/>
</dbReference>
<dbReference type="Pfam" id="PF08459">
    <property type="entry name" value="UvrC_RNaseH_dom"/>
    <property type="match status" value="1"/>
</dbReference>
<dbReference type="SMART" id="SM00465">
    <property type="entry name" value="GIYc"/>
    <property type="match status" value="1"/>
</dbReference>
<dbReference type="SMART" id="SM00278">
    <property type="entry name" value="HhH1"/>
    <property type="match status" value="2"/>
</dbReference>
<dbReference type="SUPFAM" id="SSF46600">
    <property type="entry name" value="C-terminal UvrC-binding domain of UvrB"/>
    <property type="match status" value="1"/>
</dbReference>
<dbReference type="SUPFAM" id="SSF82771">
    <property type="entry name" value="GIY-YIG endonuclease"/>
    <property type="match status" value="1"/>
</dbReference>
<dbReference type="SUPFAM" id="SSF47781">
    <property type="entry name" value="RuvA domain 2-like"/>
    <property type="match status" value="1"/>
</dbReference>
<dbReference type="PROSITE" id="PS50164">
    <property type="entry name" value="GIY_YIG"/>
    <property type="match status" value="1"/>
</dbReference>
<dbReference type="PROSITE" id="PS50151">
    <property type="entry name" value="UVR"/>
    <property type="match status" value="1"/>
</dbReference>
<dbReference type="PROSITE" id="PS50165">
    <property type="entry name" value="UVRC"/>
    <property type="match status" value="1"/>
</dbReference>